<reference key="1">
    <citation type="journal article" date="1997" name="Nature">
        <title>Genomic sequence of a Lyme disease spirochaete, Borrelia burgdorferi.</title>
        <authorList>
            <person name="Fraser C.M."/>
            <person name="Casjens S."/>
            <person name="Huang W.M."/>
            <person name="Sutton G.G."/>
            <person name="Clayton R.A."/>
            <person name="Lathigra R."/>
            <person name="White O."/>
            <person name="Ketchum K.A."/>
            <person name="Dodson R.J."/>
            <person name="Hickey E.K."/>
            <person name="Gwinn M.L."/>
            <person name="Dougherty B.A."/>
            <person name="Tomb J.-F."/>
            <person name="Fleischmann R.D."/>
            <person name="Richardson D.L."/>
            <person name="Peterson J.D."/>
            <person name="Kerlavage A.R."/>
            <person name="Quackenbush J."/>
            <person name="Salzberg S.L."/>
            <person name="Hanson M."/>
            <person name="van Vugt R."/>
            <person name="Palmer N."/>
            <person name="Adams M.D."/>
            <person name="Gocayne J.D."/>
            <person name="Weidman J.F."/>
            <person name="Utterback T.R."/>
            <person name="Watthey L."/>
            <person name="McDonald L.A."/>
            <person name="Artiach P."/>
            <person name="Bowman C."/>
            <person name="Garland S.A."/>
            <person name="Fujii C."/>
            <person name="Cotton M.D."/>
            <person name="Horst K."/>
            <person name="Roberts K.M."/>
            <person name="Hatch B."/>
            <person name="Smith H.O."/>
            <person name="Venter J.C."/>
        </authorList>
    </citation>
    <scope>NUCLEOTIDE SEQUENCE [LARGE SCALE GENOMIC DNA]</scope>
    <source>
        <strain>ATCC 35210 / DSM 4680 / CIP 102532 / B31</strain>
    </source>
</reference>
<accession>O51208</accession>
<organism>
    <name type="scientific">Borreliella burgdorferi (strain ATCC 35210 / DSM 4680 / CIP 102532 / B31)</name>
    <name type="common">Borrelia burgdorferi</name>
    <dbReference type="NCBI Taxonomy" id="224326"/>
    <lineage>
        <taxon>Bacteria</taxon>
        <taxon>Pseudomonadati</taxon>
        <taxon>Spirochaetota</taxon>
        <taxon>Spirochaetia</taxon>
        <taxon>Spirochaetales</taxon>
        <taxon>Borreliaceae</taxon>
        <taxon>Borreliella</taxon>
    </lineage>
</organism>
<proteinExistence type="inferred from homology"/>
<keyword id="KW-0963">Cytoplasm</keyword>
<keyword id="KW-0396">Initiation factor</keyword>
<keyword id="KW-0648">Protein biosynthesis</keyword>
<keyword id="KW-1185">Reference proteome</keyword>
<feature type="chain" id="PRO_0000177487" description="Translation initiation factor IF-3">
    <location>
        <begin position="1"/>
        <end position="186"/>
    </location>
</feature>
<name>IF3_BORBU</name>
<sequence>MINRNANRDRDRSRSNDKELKINYRIKAREVRVIFENGTQEVLSIEDAIKKAKEAGLDLVEVSPNVSPPVCKIIDYGKYKFHQEKRQKEQKKNQKVIKLKEVRMQPKIDAHDLDFKSKNILGFLKDGNKVKVTIRFRGRELAHTYLGYGILNSILEKVGDVNYVLESAAKMEGKTMFLIVAPKFKK</sequence>
<gene>
    <name evidence="1" type="primary">infC</name>
    <name type="ordered locus">BB_0190</name>
</gene>
<comment type="function">
    <text evidence="1">IF-3 binds to the 30S ribosomal subunit and shifts the equilibrium between 70S ribosomes and their 50S and 30S subunits in favor of the free subunits, thus enhancing the availability of 30S subunits on which protein synthesis initiation begins.</text>
</comment>
<comment type="subunit">
    <text evidence="1">Monomer.</text>
</comment>
<comment type="subcellular location">
    <subcellularLocation>
        <location evidence="1">Cytoplasm</location>
    </subcellularLocation>
</comment>
<comment type="similarity">
    <text evidence="1">Belongs to the IF-3 family.</text>
</comment>
<dbReference type="EMBL" id="AE000783">
    <property type="protein sequence ID" value="AAC66571.1"/>
    <property type="molecule type" value="Genomic_DNA"/>
</dbReference>
<dbReference type="PIR" id="F70123">
    <property type="entry name" value="F70123"/>
</dbReference>
<dbReference type="RefSeq" id="NP_212324.1">
    <property type="nucleotide sequence ID" value="NC_001318.1"/>
</dbReference>
<dbReference type="RefSeq" id="WP_002556788.1">
    <property type="nucleotide sequence ID" value="NC_001318.1"/>
</dbReference>
<dbReference type="SMR" id="O51208"/>
<dbReference type="STRING" id="224326.BB_0190"/>
<dbReference type="PaxDb" id="224326-BB_0190"/>
<dbReference type="EnsemblBacteria" id="AAC66571">
    <property type="protein sequence ID" value="AAC66571"/>
    <property type="gene ID" value="BB_0190"/>
</dbReference>
<dbReference type="GeneID" id="56567617"/>
<dbReference type="KEGG" id="bbu:BB_0190"/>
<dbReference type="PATRIC" id="fig|224326.49.peg.587"/>
<dbReference type="HOGENOM" id="CLU_054919_3_2_12"/>
<dbReference type="OrthoDB" id="9806014at2"/>
<dbReference type="Proteomes" id="UP000001807">
    <property type="component" value="Chromosome"/>
</dbReference>
<dbReference type="GO" id="GO:0005829">
    <property type="term" value="C:cytosol"/>
    <property type="evidence" value="ECO:0007669"/>
    <property type="project" value="TreeGrafter"/>
</dbReference>
<dbReference type="GO" id="GO:0016020">
    <property type="term" value="C:membrane"/>
    <property type="evidence" value="ECO:0007669"/>
    <property type="project" value="TreeGrafter"/>
</dbReference>
<dbReference type="GO" id="GO:0043022">
    <property type="term" value="F:ribosome binding"/>
    <property type="evidence" value="ECO:0007669"/>
    <property type="project" value="TreeGrafter"/>
</dbReference>
<dbReference type="GO" id="GO:0003743">
    <property type="term" value="F:translation initiation factor activity"/>
    <property type="evidence" value="ECO:0007669"/>
    <property type="project" value="UniProtKB-UniRule"/>
</dbReference>
<dbReference type="GO" id="GO:0032790">
    <property type="term" value="P:ribosome disassembly"/>
    <property type="evidence" value="ECO:0007669"/>
    <property type="project" value="TreeGrafter"/>
</dbReference>
<dbReference type="FunFam" id="3.30.110.10:FF:000001">
    <property type="entry name" value="Translation initiation factor IF-3"/>
    <property type="match status" value="1"/>
</dbReference>
<dbReference type="Gene3D" id="3.30.110.10">
    <property type="entry name" value="Translation initiation factor 3 (IF-3), C-terminal domain"/>
    <property type="match status" value="1"/>
</dbReference>
<dbReference type="Gene3D" id="3.10.20.80">
    <property type="entry name" value="Translation initiation factor 3 (IF-3), N-terminal domain"/>
    <property type="match status" value="1"/>
</dbReference>
<dbReference type="HAMAP" id="MF_00080">
    <property type="entry name" value="IF_3"/>
    <property type="match status" value="1"/>
</dbReference>
<dbReference type="InterPro" id="IPR036788">
    <property type="entry name" value="T_IF-3_C_sf"/>
</dbReference>
<dbReference type="InterPro" id="IPR036787">
    <property type="entry name" value="T_IF-3_N_sf"/>
</dbReference>
<dbReference type="InterPro" id="IPR019813">
    <property type="entry name" value="Translation_initiation_fac3_CS"/>
</dbReference>
<dbReference type="InterPro" id="IPR001288">
    <property type="entry name" value="Translation_initiation_fac_3"/>
</dbReference>
<dbReference type="InterPro" id="IPR019815">
    <property type="entry name" value="Translation_initiation_fac_3_C"/>
</dbReference>
<dbReference type="InterPro" id="IPR019814">
    <property type="entry name" value="Translation_initiation_fac_3_N"/>
</dbReference>
<dbReference type="NCBIfam" id="TIGR00168">
    <property type="entry name" value="infC"/>
    <property type="match status" value="1"/>
</dbReference>
<dbReference type="PANTHER" id="PTHR10938">
    <property type="entry name" value="TRANSLATION INITIATION FACTOR IF-3"/>
    <property type="match status" value="1"/>
</dbReference>
<dbReference type="PANTHER" id="PTHR10938:SF0">
    <property type="entry name" value="TRANSLATION INITIATION FACTOR IF-3, MITOCHONDRIAL"/>
    <property type="match status" value="1"/>
</dbReference>
<dbReference type="Pfam" id="PF00707">
    <property type="entry name" value="IF3_C"/>
    <property type="match status" value="1"/>
</dbReference>
<dbReference type="Pfam" id="PF05198">
    <property type="entry name" value="IF3_N"/>
    <property type="match status" value="1"/>
</dbReference>
<dbReference type="SUPFAM" id="SSF55200">
    <property type="entry name" value="Translation initiation factor IF3, C-terminal domain"/>
    <property type="match status" value="1"/>
</dbReference>
<dbReference type="SUPFAM" id="SSF54364">
    <property type="entry name" value="Translation initiation factor IF3, N-terminal domain"/>
    <property type="match status" value="1"/>
</dbReference>
<dbReference type="PROSITE" id="PS00938">
    <property type="entry name" value="IF3"/>
    <property type="match status" value="1"/>
</dbReference>
<protein>
    <recommendedName>
        <fullName evidence="1">Translation initiation factor IF-3</fullName>
    </recommendedName>
</protein>
<evidence type="ECO:0000255" key="1">
    <source>
        <dbReference type="HAMAP-Rule" id="MF_00080"/>
    </source>
</evidence>